<keyword id="KW-1185">Reference proteome</keyword>
<keyword id="KW-0687">Ribonucleoprotein</keyword>
<keyword id="KW-0689">Ribosomal protein</keyword>
<keyword id="KW-0694">RNA-binding</keyword>
<keyword id="KW-0699">rRNA-binding</keyword>
<accession>P30762</accession>
<accession>O32981</accession>
<evidence type="ECO:0000255" key="1">
    <source>
        <dbReference type="HAMAP-Rule" id="MF_01325"/>
    </source>
</evidence>
<evidence type="ECO:0000305" key="2"/>
<comment type="function">
    <text evidence="1">One of the primary rRNA binding proteins, it binds directly near the 3'-end of the 23S rRNA, where it nucleates assembly of the 50S subunit.</text>
</comment>
<comment type="subunit">
    <text evidence="1">Part of the 50S ribosomal subunit. Forms a cluster with proteins L14 and L19.</text>
</comment>
<comment type="similarity">
    <text evidence="1">Belongs to the universal ribosomal protein uL3 family.</text>
</comment>
<comment type="sequence caution" evidence="2">
    <conflict type="erroneous initiation">
        <sequence resource="EMBL-CDS" id="CAA78677"/>
    </conflict>
</comment>
<comment type="sequence caution" evidence="2">
    <conflict type="erroneous initiation">
        <sequence resource="EMBL-CDS" id="CAC30817"/>
    </conflict>
</comment>
<gene>
    <name evidence="1" type="primary">rplC</name>
    <name type="ordered locus">ML1863</name>
    <name type="ORF">MLCB2492.02</name>
</gene>
<reference key="1">
    <citation type="journal article" date="2001" name="Nature">
        <title>Massive gene decay in the leprosy bacillus.</title>
        <authorList>
            <person name="Cole S.T."/>
            <person name="Eiglmeier K."/>
            <person name="Parkhill J."/>
            <person name="James K.D."/>
            <person name="Thomson N.R."/>
            <person name="Wheeler P.R."/>
            <person name="Honore N."/>
            <person name="Garnier T."/>
            <person name="Churcher C.M."/>
            <person name="Harris D.E."/>
            <person name="Mungall K.L."/>
            <person name="Basham D."/>
            <person name="Brown D."/>
            <person name="Chillingworth T."/>
            <person name="Connor R."/>
            <person name="Davies R.M."/>
            <person name="Devlin K."/>
            <person name="Duthoy S."/>
            <person name="Feltwell T."/>
            <person name="Fraser A."/>
            <person name="Hamlin N."/>
            <person name="Holroyd S."/>
            <person name="Hornsby T."/>
            <person name="Jagels K."/>
            <person name="Lacroix C."/>
            <person name="Maclean J."/>
            <person name="Moule S."/>
            <person name="Murphy L.D."/>
            <person name="Oliver K."/>
            <person name="Quail M.A."/>
            <person name="Rajandream M.A."/>
            <person name="Rutherford K.M."/>
            <person name="Rutter S."/>
            <person name="Seeger K."/>
            <person name="Simon S."/>
            <person name="Simmonds M."/>
            <person name="Skelton J."/>
            <person name="Squares R."/>
            <person name="Squares S."/>
            <person name="Stevens K."/>
            <person name="Taylor K."/>
            <person name="Whitehead S."/>
            <person name="Woodward J.R."/>
            <person name="Barrell B.G."/>
        </authorList>
    </citation>
    <scope>NUCLEOTIDE SEQUENCE [LARGE SCALE GENOMIC DNA]</scope>
    <source>
        <strain>TN</strain>
    </source>
</reference>
<reference key="2">
    <citation type="journal article" date="1993" name="Mol. Microbiol.">
        <title>Nucleotide sequence of the first cosmid from the Mycobacterium leprae genome project: structure and function of the Rif-Str regions.</title>
        <authorList>
            <person name="Honore N.T."/>
            <person name="Bergh S."/>
            <person name="Chanteau S."/>
            <person name="Doucet-Populaire F."/>
            <person name="Eiglmeier K."/>
            <person name="Garnier T."/>
            <person name="Georges C."/>
            <person name="Launois P."/>
            <person name="Limpaiboon T."/>
            <person name="Newton S."/>
            <person name="Niang K."/>
            <person name="del Portillo P."/>
            <person name="Ramesh G.R."/>
            <person name="Reddi P."/>
            <person name="Ridel P.R."/>
            <person name="Sittisombut N."/>
            <person name="Wu-Hunter S."/>
            <person name="Cole S.T."/>
        </authorList>
    </citation>
    <scope>NUCLEOTIDE SEQUENCE [GENOMIC DNA] OF 1-99</scope>
</reference>
<name>RL3_MYCLE</name>
<feature type="chain" id="PRO_0000077121" description="Large ribosomal subunit protein uL3">
    <location>
        <begin position="1"/>
        <end position="217"/>
    </location>
</feature>
<feature type="sequence conflict" description="In Ref. 1; CAB11435." evidence="2" ref="1">
    <original>R</original>
    <variation>P</variation>
    <location>
        <position position="44"/>
    </location>
</feature>
<protein>
    <recommendedName>
        <fullName evidence="1">Large ribosomal subunit protein uL3</fullName>
    </recommendedName>
    <alternativeName>
        <fullName evidence="2">50S ribosomal protein L3</fullName>
    </alternativeName>
</protein>
<organism>
    <name type="scientific">Mycobacterium leprae (strain TN)</name>
    <dbReference type="NCBI Taxonomy" id="272631"/>
    <lineage>
        <taxon>Bacteria</taxon>
        <taxon>Bacillati</taxon>
        <taxon>Actinomycetota</taxon>
        <taxon>Actinomycetes</taxon>
        <taxon>Mycobacteriales</taxon>
        <taxon>Mycobacteriaceae</taxon>
        <taxon>Mycobacterium</taxon>
    </lineage>
</organism>
<dbReference type="EMBL" id="Z98756">
    <property type="protein sequence ID" value="CAB11435.1"/>
    <property type="molecule type" value="Genomic_DNA"/>
</dbReference>
<dbReference type="EMBL" id="AL583923">
    <property type="protein sequence ID" value="CAC30817.1"/>
    <property type="status" value="ALT_INIT"/>
    <property type="molecule type" value="Genomic_DNA"/>
</dbReference>
<dbReference type="EMBL" id="Z14314">
    <property type="protein sequence ID" value="CAA78677.1"/>
    <property type="status" value="ALT_INIT"/>
    <property type="molecule type" value="Genomic_DNA"/>
</dbReference>
<dbReference type="PIR" id="A87142">
    <property type="entry name" value="A87142"/>
</dbReference>
<dbReference type="PIR" id="S31154">
    <property type="entry name" value="S31154"/>
</dbReference>
<dbReference type="PIR" id="T45364">
    <property type="entry name" value="T45364"/>
</dbReference>
<dbReference type="RefSeq" id="WP_041323030.1">
    <property type="nucleotide sequence ID" value="NC_002677.1"/>
</dbReference>
<dbReference type="SMR" id="P30762"/>
<dbReference type="STRING" id="272631.gene:17575711"/>
<dbReference type="KEGG" id="mle:ML1863"/>
<dbReference type="Leproma" id="ML1863"/>
<dbReference type="eggNOG" id="COG0087">
    <property type="taxonomic scope" value="Bacteria"/>
</dbReference>
<dbReference type="HOGENOM" id="CLU_044142_4_1_11"/>
<dbReference type="Proteomes" id="UP000000806">
    <property type="component" value="Chromosome"/>
</dbReference>
<dbReference type="GO" id="GO:0022625">
    <property type="term" value="C:cytosolic large ribosomal subunit"/>
    <property type="evidence" value="ECO:0007669"/>
    <property type="project" value="TreeGrafter"/>
</dbReference>
<dbReference type="GO" id="GO:0019843">
    <property type="term" value="F:rRNA binding"/>
    <property type="evidence" value="ECO:0007669"/>
    <property type="project" value="UniProtKB-UniRule"/>
</dbReference>
<dbReference type="GO" id="GO:0003735">
    <property type="term" value="F:structural constituent of ribosome"/>
    <property type="evidence" value="ECO:0007669"/>
    <property type="project" value="InterPro"/>
</dbReference>
<dbReference type="GO" id="GO:0006412">
    <property type="term" value="P:translation"/>
    <property type="evidence" value="ECO:0007669"/>
    <property type="project" value="UniProtKB-UniRule"/>
</dbReference>
<dbReference type="FunFam" id="2.40.30.10:FF:000004">
    <property type="entry name" value="50S ribosomal protein L3"/>
    <property type="match status" value="1"/>
</dbReference>
<dbReference type="FunFam" id="3.30.160.810:FF:000001">
    <property type="entry name" value="50S ribosomal protein L3"/>
    <property type="match status" value="1"/>
</dbReference>
<dbReference type="Gene3D" id="3.30.160.810">
    <property type="match status" value="1"/>
</dbReference>
<dbReference type="Gene3D" id="2.40.30.10">
    <property type="entry name" value="Translation factors"/>
    <property type="match status" value="1"/>
</dbReference>
<dbReference type="HAMAP" id="MF_01325_B">
    <property type="entry name" value="Ribosomal_uL3_B"/>
    <property type="match status" value="1"/>
</dbReference>
<dbReference type="InterPro" id="IPR000597">
    <property type="entry name" value="Ribosomal_uL3"/>
</dbReference>
<dbReference type="InterPro" id="IPR019927">
    <property type="entry name" value="Ribosomal_uL3_bac/org-type"/>
</dbReference>
<dbReference type="InterPro" id="IPR019926">
    <property type="entry name" value="Ribosomal_uL3_CS"/>
</dbReference>
<dbReference type="InterPro" id="IPR009000">
    <property type="entry name" value="Transl_B-barrel_sf"/>
</dbReference>
<dbReference type="NCBIfam" id="TIGR03625">
    <property type="entry name" value="L3_bact"/>
    <property type="match status" value="1"/>
</dbReference>
<dbReference type="PANTHER" id="PTHR11229">
    <property type="entry name" value="50S RIBOSOMAL PROTEIN L3"/>
    <property type="match status" value="1"/>
</dbReference>
<dbReference type="PANTHER" id="PTHR11229:SF16">
    <property type="entry name" value="LARGE RIBOSOMAL SUBUNIT PROTEIN UL3C"/>
    <property type="match status" value="1"/>
</dbReference>
<dbReference type="Pfam" id="PF00297">
    <property type="entry name" value="Ribosomal_L3"/>
    <property type="match status" value="1"/>
</dbReference>
<dbReference type="SUPFAM" id="SSF50447">
    <property type="entry name" value="Translation proteins"/>
    <property type="match status" value="1"/>
</dbReference>
<dbReference type="PROSITE" id="PS00474">
    <property type="entry name" value="RIBOSOMAL_L3"/>
    <property type="match status" value="1"/>
</dbReference>
<sequence length="217" mass="23241">MARKGILGTKLGMTQVFDENNRVVPVTVVKAGPNVVTRIRTLERDGYSAVQLAYGEISPRKVNKPVTGQYNSAGVNPRRYLAELRLDHPDAAAEYEVGQELTAEIFADATYVDVTGTSKGKGFSGTMKRHGFRGQGASHGAQAVHRRPGSIGGCATPARVFKGTRMAGRMGNDRVTVQNLLVHKVDTENGVLLIKGAVPGRTGGLVMVRSAIKRGEK</sequence>
<proteinExistence type="inferred from homology"/>